<gene>
    <name evidence="1" type="primary">hslU</name>
    <name type="ordered locus">LMHCC_1296</name>
</gene>
<dbReference type="EMBL" id="CP001175">
    <property type="protein sequence ID" value="ACK39642.1"/>
    <property type="molecule type" value="Genomic_DNA"/>
</dbReference>
<dbReference type="RefSeq" id="WP_012581410.1">
    <property type="nucleotide sequence ID" value="NC_011660.1"/>
</dbReference>
<dbReference type="SMR" id="B8DG52"/>
<dbReference type="KEGG" id="lmh:LMHCC_1296"/>
<dbReference type="HOGENOM" id="CLU_033123_0_0_9"/>
<dbReference type="GO" id="GO:0009376">
    <property type="term" value="C:HslUV protease complex"/>
    <property type="evidence" value="ECO:0007669"/>
    <property type="project" value="UniProtKB-UniRule"/>
</dbReference>
<dbReference type="GO" id="GO:0005524">
    <property type="term" value="F:ATP binding"/>
    <property type="evidence" value="ECO:0007669"/>
    <property type="project" value="UniProtKB-UniRule"/>
</dbReference>
<dbReference type="GO" id="GO:0016887">
    <property type="term" value="F:ATP hydrolysis activity"/>
    <property type="evidence" value="ECO:0007669"/>
    <property type="project" value="InterPro"/>
</dbReference>
<dbReference type="GO" id="GO:0008233">
    <property type="term" value="F:peptidase activity"/>
    <property type="evidence" value="ECO:0007669"/>
    <property type="project" value="InterPro"/>
</dbReference>
<dbReference type="GO" id="GO:0036402">
    <property type="term" value="F:proteasome-activating activity"/>
    <property type="evidence" value="ECO:0007669"/>
    <property type="project" value="UniProtKB-UniRule"/>
</dbReference>
<dbReference type="GO" id="GO:0043335">
    <property type="term" value="P:protein unfolding"/>
    <property type="evidence" value="ECO:0007669"/>
    <property type="project" value="UniProtKB-UniRule"/>
</dbReference>
<dbReference type="GO" id="GO:0051603">
    <property type="term" value="P:proteolysis involved in protein catabolic process"/>
    <property type="evidence" value="ECO:0007669"/>
    <property type="project" value="TreeGrafter"/>
</dbReference>
<dbReference type="CDD" id="cd19498">
    <property type="entry name" value="RecA-like_HslU"/>
    <property type="match status" value="1"/>
</dbReference>
<dbReference type="Gene3D" id="1.10.8.60">
    <property type="match status" value="1"/>
</dbReference>
<dbReference type="Gene3D" id="3.40.50.300">
    <property type="entry name" value="P-loop containing nucleotide triphosphate hydrolases"/>
    <property type="match status" value="2"/>
</dbReference>
<dbReference type="HAMAP" id="MF_00249">
    <property type="entry name" value="HslU"/>
    <property type="match status" value="1"/>
</dbReference>
<dbReference type="InterPro" id="IPR003593">
    <property type="entry name" value="AAA+_ATPase"/>
</dbReference>
<dbReference type="InterPro" id="IPR050052">
    <property type="entry name" value="ATP-dep_Clp_protease_ClpX"/>
</dbReference>
<dbReference type="InterPro" id="IPR003959">
    <property type="entry name" value="ATPase_AAA_core"/>
</dbReference>
<dbReference type="InterPro" id="IPR019489">
    <property type="entry name" value="Clp_ATPase_C"/>
</dbReference>
<dbReference type="InterPro" id="IPR004491">
    <property type="entry name" value="HslU"/>
</dbReference>
<dbReference type="InterPro" id="IPR027417">
    <property type="entry name" value="P-loop_NTPase"/>
</dbReference>
<dbReference type="NCBIfam" id="TIGR00390">
    <property type="entry name" value="hslU"/>
    <property type="match status" value="1"/>
</dbReference>
<dbReference type="NCBIfam" id="NF003544">
    <property type="entry name" value="PRK05201.1"/>
    <property type="match status" value="1"/>
</dbReference>
<dbReference type="PANTHER" id="PTHR48102">
    <property type="entry name" value="ATP-DEPENDENT CLP PROTEASE ATP-BINDING SUBUNIT CLPX-LIKE, MITOCHONDRIAL-RELATED"/>
    <property type="match status" value="1"/>
</dbReference>
<dbReference type="PANTHER" id="PTHR48102:SF3">
    <property type="entry name" value="ATP-DEPENDENT PROTEASE ATPASE SUBUNIT HSLU"/>
    <property type="match status" value="1"/>
</dbReference>
<dbReference type="Pfam" id="PF00004">
    <property type="entry name" value="AAA"/>
    <property type="match status" value="1"/>
</dbReference>
<dbReference type="Pfam" id="PF07724">
    <property type="entry name" value="AAA_2"/>
    <property type="match status" value="1"/>
</dbReference>
<dbReference type="Pfam" id="PF10431">
    <property type="entry name" value="ClpB_D2-small"/>
    <property type="match status" value="1"/>
</dbReference>
<dbReference type="SMART" id="SM00382">
    <property type="entry name" value="AAA"/>
    <property type="match status" value="1"/>
</dbReference>
<dbReference type="SMART" id="SM01086">
    <property type="entry name" value="ClpB_D2-small"/>
    <property type="match status" value="1"/>
</dbReference>
<dbReference type="SUPFAM" id="SSF52540">
    <property type="entry name" value="P-loop containing nucleoside triphosphate hydrolases"/>
    <property type="match status" value="1"/>
</dbReference>
<comment type="function">
    <text evidence="1">ATPase subunit of a proteasome-like degradation complex; this subunit has chaperone activity. The binding of ATP and its subsequent hydrolysis by HslU are essential for unfolding of protein substrates subsequently hydrolyzed by HslV. HslU recognizes the N-terminal part of its protein substrates and unfolds these before they are guided to HslV for hydrolysis.</text>
</comment>
<comment type="subunit">
    <text evidence="1">A double ring-shaped homohexamer of HslV is capped on each side by a ring-shaped HslU homohexamer. The assembly of the HslU/HslV complex is dependent on binding of ATP.</text>
</comment>
<comment type="subcellular location">
    <subcellularLocation>
        <location evidence="1">Cytoplasm</location>
    </subcellularLocation>
</comment>
<comment type="similarity">
    <text evidence="1">Belongs to the ClpX chaperone family. HslU subfamily.</text>
</comment>
<feature type="chain" id="PRO_1000125441" description="ATP-dependent protease ATPase subunit HslU">
    <location>
        <begin position="1"/>
        <end position="469"/>
    </location>
</feature>
<feature type="binding site" evidence="1">
    <location>
        <position position="24"/>
    </location>
    <ligand>
        <name>ATP</name>
        <dbReference type="ChEBI" id="CHEBI:30616"/>
    </ligand>
</feature>
<feature type="binding site" evidence="1">
    <location>
        <begin position="66"/>
        <end position="71"/>
    </location>
    <ligand>
        <name>ATP</name>
        <dbReference type="ChEBI" id="CHEBI:30616"/>
    </ligand>
</feature>
<feature type="binding site" evidence="1">
    <location>
        <position position="282"/>
    </location>
    <ligand>
        <name>ATP</name>
        <dbReference type="ChEBI" id="CHEBI:30616"/>
    </ligand>
</feature>
<feature type="binding site" evidence="1">
    <location>
        <position position="347"/>
    </location>
    <ligand>
        <name>ATP</name>
        <dbReference type="ChEBI" id="CHEBI:30616"/>
    </ligand>
</feature>
<feature type="binding site" evidence="1">
    <location>
        <position position="419"/>
    </location>
    <ligand>
        <name>ATP</name>
        <dbReference type="ChEBI" id="CHEBI:30616"/>
    </ligand>
</feature>
<keyword id="KW-0067">ATP-binding</keyword>
<keyword id="KW-0143">Chaperone</keyword>
<keyword id="KW-0963">Cytoplasm</keyword>
<keyword id="KW-0547">Nucleotide-binding</keyword>
<keyword id="KW-0346">Stress response</keyword>
<reference key="1">
    <citation type="journal article" date="2011" name="J. Bacteriol.">
        <title>Genome sequence of lineage III Listeria monocytogenes strain HCC23.</title>
        <authorList>
            <person name="Steele C.L."/>
            <person name="Donaldson J.R."/>
            <person name="Paul D."/>
            <person name="Banes M.M."/>
            <person name="Arick T."/>
            <person name="Bridges S.M."/>
            <person name="Lawrence M.L."/>
        </authorList>
    </citation>
    <scope>NUCLEOTIDE SEQUENCE [LARGE SCALE GENOMIC DNA]</scope>
    <source>
        <strain>HCC23</strain>
    </source>
</reference>
<protein>
    <recommendedName>
        <fullName evidence="1">ATP-dependent protease ATPase subunit HslU</fullName>
    </recommendedName>
    <alternativeName>
        <fullName evidence="1">Unfoldase HslU</fullName>
    </alternativeName>
</protein>
<evidence type="ECO:0000255" key="1">
    <source>
        <dbReference type="HAMAP-Rule" id="MF_00249"/>
    </source>
</evidence>
<accession>B8DG52</accession>
<sequence>MTNLTLMNQLTPKQIVEKLDQYIIGQTGAKKSVAVALRNRYRRQLMDESIRDEIIPKNILMIGPTGVGKTEIARRIAKIVRAPFSKVEATKFTEVGYVGRDVESMVRDLVEVSVRLVKEEKMQLVRVKAEKNAEKRLIKLLAPSQKKKQTTSQNPLEALFGGMNQPDESAEEEVDQELKNKRSQIEWRLQNGELDDEIVTVEVKEQQNPMLDMMRGAGMDQMNGMQDALSGMFPAKKKKRKVTVREAKKILFEDEASKLIDADELAAEGIHRAEQMGMIFIDEIDKIASKEGGGNAQVSREGVQRDILPIVEGSQISTKYGTVNTEYILFIAAGAFHMSKPSDLIPELQGRFPIRIELDKLTQEDFYKILTEPDNALIKQYKALLKTEGIDLIFTKEAVERIAEIAFQVNQDSDNIGARRLHTILEKLLEDLLFEAPEINMESIKVTENYVNEKLAPIMQNKDLTQFIL</sequence>
<proteinExistence type="inferred from homology"/>
<organism>
    <name type="scientific">Listeria monocytogenes serotype 4a (strain HCC23)</name>
    <dbReference type="NCBI Taxonomy" id="552536"/>
    <lineage>
        <taxon>Bacteria</taxon>
        <taxon>Bacillati</taxon>
        <taxon>Bacillota</taxon>
        <taxon>Bacilli</taxon>
        <taxon>Bacillales</taxon>
        <taxon>Listeriaceae</taxon>
        <taxon>Listeria</taxon>
    </lineage>
</organism>
<name>HSLU_LISMH</name>